<reference key="1">
    <citation type="journal article" date="2000" name="Proc. Natl. Acad. Sci. U.S.A.">
        <title>Genome sequence of Halobacterium species NRC-1.</title>
        <authorList>
            <person name="Ng W.V."/>
            <person name="Kennedy S.P."/>
            <person name="Mahairas G.G."/>
            <person name="Berquist B."/>
            <person name="Pan M."/>
            <person name="Shukla H.D."/>
            <person name="Lasky S.R."/>
            <person name="Baliga N.S."/>
            <person name="Thorsson V."/>
            <person name="Sbrogna J."/>
            <person name="Swartzell S."/>
            <person name="Weir D."/>
            <person name="Hall J."/>
            <person name="Dahl T.A."/>
            <person name="Welti R."/>
            <person name="Goo Y.A."/>
            <person name="Leithauser B."/>
            <person name="Keller K."/>
            <person name="Cruz R."/>
            <person name="Danson M.J."/>
            <person name="Hough D.W."/>
            <person name="Maddocks D.G."/>
            <person name="Jablonski P.E."/>
            <person name="Krebs M.P."/>
            <person name="Angevine C.M."/>
            <person name="Dale H."/>
            <person name="Isenbarger T.A."/>
            <person name="Peck R.F."/>
            <person name="Pohlschroder M."/>
            <person name="Spudich J.L."/>
            <person name="Jung K.-H."/>
            <person name="Alam M."/>
            <person name="Freitas T."/>
            <person name="Hou S."/>
            <person name="Daniels C.J."/>
            <person name="Dennis P.P."/>
            <person name="Omer A.D."/>
            <person name="Ebhardt H."/>
            <person name="Lowe T.M."/>
            <person name="Liang P."/>
            <person name="Riley M."/>
            <person name="Hood L."/>
            <person name="DasSarma S."/>
        </authorList>
    </citation>
    <scope>NUCLEOTIDE SEQUENCE [LARGE SCALE GENOMIC DNA]</scope>
    <source>
        <strain>ATCC 700922 / JCM 11081 / NRC-1</strain>
    </source>
</reference>
<organism>
    <name type="scientific">Halobacterium salinarum (strain ATCC 700922 / JCM 11081 / NRC-1)</name>
    <name type="common">Halobacterium halobium</name>
    <dbReference type="NCBI Taxonomy" id="64091"/>
    <lineage>
        <taxon>Archaea</taxon>
        <taxon>Methanobacteriati</taxon>
        <taxon>Methanobacteriota</taxon>
        <taxon>Stenosarchaea group</taxon>
        <taxon>Halobacteria</taxon>
        <taxon>Halobacteriales</taxon>
        <taxon>Halobacteriaceae</taxon>
        <taxon>Halobacterium</taxon>
        <taxon>Halobacterium salinarum NRC-34001</taxon>
    </lineage>
</organism>
<accession>Q9HSM2</accession>
<sequence>MGIVDEFQALKAETDADLLAMQVGDFYEFFAADARTVASVLDLQVSEKSNHGSSYPMAGVPVDDLTPYLAALVERGYRVAVAEQSETDAGDIEREIERVVTPGTLLASTDADPRYLAAVVREAGGDWGLAFVDVTTGQFRVTRGADRADAVTELYRFAPAEVLPGPALRGDDDFLGVLRERTDATLTLHDAGAFDAGRATHRVREQFGDGVIESLGVAADGPVVRAAGAAVGYIAAADEGVLASVSRIQPFGGGDHVELDATTQRNLELTETMTGGSDGSLLATIDHTASAAGGRRLAAWVTRPTRDRAELDRRQAAVGALADAALARDALGDVLGEIYDLERLASRAASGRADATDLLRVRDTLAALPDVADALTTTPELAESPARDVLARVDRAAAADVRAELADALADDPPKTLSEGGLLQAGYDEALDELLAAHDEHRAWLDGLADREKDRLGITHLQVDRNKTDGYYIQVGNSETDAVPDGEDGAYRRIKQLKNATRYTMAELDSHEREVLRIEAERAELERELFAALRERVGERAAVLQDVGRALAEVDALVSLAEHAAANQWVRPELVAGDGLDIDAGRHPVVEQTTSFVPNDARFDASRRFQVVTGPNMSGKSTYMRQVAVIVLLAQVGSFVPADAARIGLVDGIYTRVGALDELAGGRSTFMVEMEELSRILHAATSDSLVVLDEVGRGTATYDGISIAWAATEYLHNEVRATTLFATHYHELTALADHLDAVVNVHVAAEERDGAVTFLRTVRDGATDRSYGVHVAALAGVPEPVVDRARGVLDRLREENAVEAKGSAGESVQAVFDVDSGGFVDDAGDDGEADDPEAAAVLDELRTVELAETSPVELLGTVQAWQDRLED</sequence>
<feature type="chain" id="PRO_0000115175" description="DNA mismatch repair protein MutS 1">
    <location>
        <begin position="1"/>
        <end position="871"/>
    </location>
</feature>
<feature type="binding site" evidence="2">
    <location>
        <begin position="614"/>
        <end position="621"/>
    </location>
    <ligand>
        <name>ATP</name>
        <dbReference type="ChEBI" id="CHEBI:30616"/>
    </ligand>
</feature>
<protein>
    <recommendedName>
        <fullName>DNA mismatch repair protein MutS 1</fullName>
    </recommendedName>
</protein>
<proteinExistence type="inferred from homology"/>
<gene>
    <name type="primary">mutS1</name>
    <name type="ordered locus">VNG_0163G</name>
</gene>
<dbReference type="EMBL" id="AE004437">
    <property type="protein sequence ID" value="AAG18781.1"/>
    <property type="molecule type" value="Genomic_DNA"/>
</dbReference>
<dbReference type="PIR" id="A84177">
    <property type="entry name" value="A84177"/>
</dbReference>
<dbReference type="SMR" id="Q9HSM2"/>
<dbReference type="STRING" id="64091.VNG_0163G"/>
<dbReference type="PaxDb" id="64091-VNG_0163G"/>
<dbReference type="KEGG" id="hal:VNG_0163G"/>
<dbReference type="PATRIC" id="fig|64091.14.peg.117"/>
<dbReference type="HOGENOM" id="CLU_002472_4_1_2"/>
<dbReference type="InParanoid" id="Q9HSM2"/>
<dbReference type="OrthoDB" id="146065at2157"/>
<dbReference type="PhylomeDB" id="Q9HSM2"/>
<dbReference type="Proteomes" id="UP000000554">
    <property type="component" value="Chromosome"/>
</dbReference>
<dbReference type="GO" id="GO:0005524">
    <property type="term" value="F:ATP binding"/>
    <property type="evidence" value="ECO:0007669"/>
    <property type="project" value="UniProtKB-UniRule"/>
</dbReference>
<dbReference type="GO" id="GO:0140664">
    <property type="term" value="F:ATP-dependent DNA damage sensor activity"/>
    <property type="evidence" value="ECO:0007669"/>
    <property type="project" value="InterPro"/>
</dbReference>
<dbReference type="GO" id="GO:0003684">
    <property type="term" value="F:damaged DNA binding"/>
    <property type="evidence" value="ECO:0007669"/>
    <property type="project" value="UniProtKB-UniRule"/>
</dbReference>
<dbReference type="GO" id="GO:0003690">
    <property type="term" value="F:double-stranded DNA binding"/>
    <property type="evidence" value="ECO:0000318"/>
    <property type="project" value="GO_Central"/>
</dbReference>
<dbReference type="GO" id="GO:0030983">
    <property type="term" value="F:mismatched DNA binding"/>
    <property type="evidence" value="ECO:0007669"/>
    <property type="project" value="InterPro"/>
</dbReference>
<dbReference type="GO" id="GO:0006298">
    <property type="term" value="P:mismatch repair"/>
    <property type="evidence" value="ECO:0007669"/>
    <property type="project" value="UniProtKB-UniRule"/>
</dbReference>
<dbReference type="CDD" id="cd03284">
    <property type="entry name" value="ABC_MutS1"/>
    <property type="match status" value="1"/>
</dbReference>
<dbReference type="FunFam" id="1.10.1420.10:FF:000001">
    <property type="entry name" value="DNA mismatch repair protein MutS"/>
    <property type="match status" value="1"/>
</dbReference>
<dbReference type="FunFam" id="3.40.50.300:FF:002984">
    <property type="entry name" value="DNA mismatch repair protein MutS 1"/>
    <property type="match status" value="1"/>
</dbReference>
<dbReference type="Gene3D" id="1.10.1420.10">
    <property type="match status" value="2"/>
</dbReference>
<dbReference type="Gene3D" id="3.40.1170.10">
    <property type="entry name" value="DNA repair protein MutS, domain I"/>
    <property type="match status" value="1"/>
</dbReference>
<dbReference type="Gene3D" id="3.30.420.110">
    <property type="entry name" value="MutS, connector domain"/>
    <property type="match status" value="1"/>
</dbReference>
<dbReference type="Gene3D" id="3.40.50.300">
    <property type="entry name" value="P-loop containing nucleotide triphosphate hydrolases"/>
    <property type="match status" value="1"/>
</dbReference>
<dbReference type="HAMAP" id="MF_00096">
    <property type="entry name" value="MutS"/>
    <property type="match status" value="1"/>
</dbReference>
<dbReference type="InterPro" id="IPR005748">
    <property type="entry name" value="DNA_mismatch_repair_MutS"/>
</dbReference>
<dbReference type="InterPro" id="IPR007695">
    <property type="entry name" value="DNA_mismatch_repair_MutS-lik_N"/>
</dbReference>
<dbReference type="InterPro" id="IPR017261">
    <property type="entry name" value="DNA_mismatch_repair_MutS/MSH"/>
</dbReference>
<dbReference type="InterPro" id="IPR000432">
    <property type="entry name" value="DNA_mismatch_repair_MutS_C"/>
</dbReference>
<dbReference type="InterPro" id="IPR007861">
    <property type="entry name" value="DNA_mismatch_repair_MutS_clamp"/>
</dbReference>
<dbReference type="InterPro" id="IPR007696">
    <property type="entry name" value="DNA_mismatch_repair_MutS_core"/>
</dbReference>
<dbReference type="InterPro" id="IPR016151">
    <property type="entry name" value="DNA_mismatch_repair_MutS_N"/>
</dbReference>
<dbReference type="InterPro" id="IPR036187">
    <property type="entry name" value="DNA_mismatch_repair_MutS_sf"/>
</dbReference>
<dbReference type="InterPro" id="IPR007860">
    <property type="entry name" value="DNA_mmatch_repair_MutS_con_dom"/>
</dbReference>
<dbReference type="InterPro" id="IPR045076">
    <property type="entry name" value="MutS"/>
</dbReference>
<dbReference type="InterPro" id="IPR036678">
    <property type="entry name" value="MutS_con_dom_sf"/>
</dbReference>
<dbReference type="InterPro" id="IPR027417">
    <property type="entry name" value="P-loop_NTPase"/>
</dbReference>
<dbReference type="NCBIfam" id="TIGR01070">
    <property type="entry name" value="mutS1"/>
    <property type="match status" value="1"/>
</dbReference>
<dbReference type="NCBIfam" id="NF003810">
    <property type="entry name" value="PRK05399.1"/>
    <property type="match status" value="1"/>
</dbReference>
<dbReference type="PANTHER" id="PTHR11361:SF34">
    <property type="entry name" value="DNA MISMATCH REPAIR PROTEIN MSH1, MITOCHONDRIAL"/>
    <property type="match status" value="1"/>
</dbReference>
<dbReference type="PANTHER" id="PTHR11361">
    <property type="entry name" value="DNA MISMATCH REPAIR PROTEIN MUTS FAMILY MEMBER"/>
    <property type="match status" value="1"/>
</dbReference>
<dbReference type="Pfam" id="PF01624">
    <property type="entry name" value="MutS_I"/>
    <property type="match status" value="1"/>
</dbReference>
<dbReference type="Pfam" id="PF05188">
    <property type="entry name" value="MutS_II"/>
    <property type="match status" value="1"/>
</dbReference>
<dbReference type="Pfam" id="PF05192">
    <property type="entry name" value="MutS_III"/>
    <property type="match status" value="1"/>
</dbReference>
<dbReference type="Pfam" id="PF05190">
    <property type="entry name" value="MutS_IV"/>
    <property type="match status" value="1"/>
</dbReference>
<dbReference type="Pfam" id="PF00488">
    <property type="entry name" value="MutS_V"/>
    <property type="match status" value="1"/>
</dbReference>
<dbReference type="PIRSF" id="PIRSF037677">
    <property type="entry name" value="DNA_mis_repair_Msh6"/>
    <property type="match status" value="1"/>
</dbReference>
<dbReference type="SMART" id="SM00534">
    <property type="entry name" value="MUTSac"/>
    <property type="match status" value="1"/>
</dbReference>
<dbReference type="SMART" id="SM00533">
    <property type="entry name" value="MUTSd"/>
    <property type="match status" value="1"/>
</dbReference>
<dbReference type="SUPFAM" id="SSF55271">
    <property type="entry name" value="DNA repair protein MutS, domain I"/>
    <property type="match status" value="1"/>
</dbReference>
<dbReference type="SUPFAM" id="SSF53150">
    <property type="entry name" value="DNA repair protein MutS, domain II"/>
    <property type="match status" value="1"/>
</dbReference>
<dbReference type="SUPFAM" id="SSF48334">
    <property type="entry name" value="DNA repair protein MutS, domain III"/>
    <property type="match status" value="1"/>
</dbReference>
<dbReference type="SUPFAM" id="SSF52540">
    <property type="entry name" value="P-loop containing nucleoside triphosphate hydrolases"/>
    <property type="match status" value="1"/>
</dbReference>
<dbReference type="PROSITE" id="PS00486">
    <property type="entry name" value="DNA_MISMATCH_REPAIR_2"/>
    <property type="match status" value="1"/>
</dbReference>
<comment type="function">
    <text evidence="1">This protein is involved in the repair of mismatches in DNA. It is possible that it carries out the mismatch recognition step. This protein has a weak ATPase activity (By similarity).</text>
</comment>
<comment type="similarity">
    <text evidence="3">Belongs to the DNA mismatch repair MutS family.</text>
</comment>
<evidence type="ECO:0000250" key="1"/>
<evidence type="ECO:0000255" key="2"/>
<evidence type="ECO:0000305" key="3"/>
<keyword id="KW-0067">ATP-binding</keyword>
<keyword id="KW-0227">DNA damage</keyword>
<keyword id="KW-0234">DNA repair</keyword>
<keyword id="KW-0238">DNA-binding</keyword>
<keyword id="KW-0547">Nucleotide-binding</keyword>
<keyword id="KW-1185">Reference proteome</keyword>
<name>MUTS1_HALSA</name>